<proteinExistence type="evidence at protein level"/>
<organism>
    <name type="scientific">Kluyveromyces lactis (strain ATCC 8585 / CBS 2359 / DSM 70799 / NBRC 1267 / NRRL Y-1140 / WM37)</name>
    <name type="common">Yeast</name>
    <name type="synonym">Candida sphaerica</name>
    <dbReference type="NCBI Taxonomy" id="284590"/>
    <lineage>
        <taxon>Eukaryota</taxon>
        <taxon>Fungi</taxon>
        <taxon>Dikarya</taxon>
        <taxon>Ascomycota</taxon>
        <taxon>Saccharomycotina</taxon>
        <taxon>Saccharomycetes</taxon>
        <taxon>Saccharomycetales</taxon>
        <taxon>Saccharomycetaceae</taxon>
        <taxon>Kluyveromyces</taxon>
    </lineage>
</organism>
<gene>
    <name type="primary">HHT1</name>
    <name type="ordered locus">KLLA0E08591g</name>
</gene>
<gene>
    <name type="primary">HHT2</name>
    <name type="ordered locus">KLLA0E17677g</name>
</gene>
<evidence type="ECO:0000250" key="1"/>
<evidence type="ECO:0000256" key="2">
    <source>
        <dbReference type="SAM" id="MobiDB-lite"/>
    </source>
</evidence>
<evidence type="ECO:0000305" key="3"/>
<name>H3_KLULA</name>
<accession>P61831</accession>
<accession>P02303</accession>
<accession>P13996</accession>
<accession>Q6CMU5</accession>
<accession>Q6CP01</accession>
<keyword id="KW-0002">3D-structure</keyword>
<keyword id="KW-0007">Acetylation</keyword>
<keyword id="KW-0158">Chromosome</keyword>
<keyword id="KW-0238">DNA-binding</keyword>
<keyword id="KW-0488">Methylation</keyword>
<keyword id="KW-0544">Nucleosome core</keyword>
<keyword id="KW-0539">Nucleus</keyword>
<keyword id="KW-0597">Phosphoprotein</keyword>
<keyword id="KW-1185">Reference proteome</keyword>
<feature type="initiator methionine" description="Removed" evidence="1">
    <location>
        <position position="1"/>
    </location>
</feature>
<feature type="chain" id="PRO_0000221362" description="Histone H3">
    <location>
        <begin position="2"/>
        <end position="136"/>
    </location>
</feature>
<feature type="region of interest" description="Disordered" evidence="2">
    <location>
        <begin position="1"/>
        <end position="43"/>
    </location>
</feature>
<feature type="modified residue" description="N6,N6,N6-trimethyllysine; alternate" evidence="1">
    <location>
        <position position="5"/>
    </location>
</feature>
<feature type="modified residue" description="N6,N6-dimethyllysine; alternate" evidence="1">
    <location>
        <position position="5"/>
    </location>
</feature>
<feature type="modified residue" description="N6-methyllysine; alternate" evidence="1">
    <location>
        <position position="5"/>
    </location>
</feature>
<feature type="modified residue" description="N6-acetyllysine; alternate" evidence="1">
    <location>
        <position position="10"/>
    </location>
</feature>
<feature type="modified residue" description="N6-methyllysine; alternate" evidence="1">
    <location>
        <position position="10"/>
    </location>
</feature>
<feature type="modified residue" description="Phosphoserine" evidence="1">
    <location>
        <position position="11"/>
    </location>
</feature>
<feature type="modified residue" description="N6,N6-dimethyllysine; alternate" evidence="1">
    <location>
        <position position="15"/>
    </location>
</feature>
<feature type="modified residue" description="N6-acetyllysine; alternate" evidence="1">
    <location>
        <position position="15"/>
    </location>
</feature>
<feature type="modified residue" description="N6-methyllysine; alternate" evidence="1">
    <location>
        <position position="15"/>
    </location>
</feature>
<feature type="modified residue" description="N6-acetyllysine; alternate" evidence="1">
    <location>
        <position position="19"/>
    </location>
</feature>
<feature type="modified residue" description="N6-methyllysine; alternate" evidence="1">
    <location>
        <position position="19"/>
    </location>
</feature>
<feature type="modified residue" description="N6-acetyllysine; alternate" evidence="1">
    <location>
        <position position="24"/>
    </location>
</feature>
<feature type="modified residue" description="N6-methyllysine; alternate" evidence="1">
    <location>
        <position position="24"/>
    </location>
</feature>
<feature type="modified residue" description="N6,N6,N6-trimethyllysine; alternate" evidence="1">
    <location>
        <position position="28"/>
    </location>
</feature>
<feature type="modified residue" description="N6,N6-dimethyllysine; alternate" evidence="1">
    <location>
        <position position="28"/>
    </location>
</feature>
<feature type="modified residue" description="N6-acetyllysine; alternate" evidence="1">
    <location>
        <position position="28"/>
    </location>
</feature>
<feature type="modified residue" description="N6-methyllysine; alternate" evidence="1">
    <location>
        <position position="28"/>
    </location>
</feature>
<feature type="modified residue" description="N6,N6,N6-trimethyllysine; alternate" evidence="1">
    <location>
        <position position="37"/>
    </location>
</feature>
<feature type="modified residue" description="N6,N6-dimethyllysine; alternate" evidence="1">
    <location>
        <position position="37"/>
    </location>
</feature>
<feature type="modified residue" description="N6-acetyllysine; alternate" evidence="1">
    <location>
        <position position="37"/>
    </location>
</feature>
<feature type="modified residue" description="N6-methyllysine; alternate" evidence="1">
    <location>
        <position position="37"/>
    </location>
</feature>
<feature type="modified residue" description="N6-acetyllysine" evidence="1">
    <location>
        <position position="57"/>
    </location>
</feature>
<feature type="modified residue" description="N6-acetyllysine" evidence="1">
    <location>
        <position position="65"/>
    </location>
</feature>
<feature type="modified residue" description="N6,N6,N6-trimethyllysine; alternate" evidence="1">
    <location>
        <position position="80"/>
    </location>
</feature>
<feature type="modified residue" description="N6,N6-dimethyllysine; alternate" evidence="1">
    <location>
        <position position="80"/>
    </location>
</feature>
<feature type="modified residue" description="N6-methyllysine; alternate" evidence="1">
    <location>
        <position position="80"/>
    </location>
</feature>
<sequence>MARTKQTARKSTGGKAPRKQLASKAARKSAPSTGGVKKPHRYKPGTVALREIRRFQKSTELLIRKLPFQRLVREIAQDFKTDLRFQSSAIGALQESVEAYLVSLFEDTNLAAIHAKRVTIQKKDIKLARRLRGERS</sequence>
<protein>
    <recommendedName>
        <fullName>Histone H3</fullName>
    </recommendedName>
</protein>
<dbReference type="EMBL" id="X14230">
    <property type="protein sequence ID" value="CAA32444.1"/>
    <property type="molecule type" value="Genomic_DNA"/>
</dbReference>
<dbReference type="EMBL" id="CR382125">
    <property type="protein sequence ID" value="CAG99425.1"/>
    <property type="status" value="ALT_INIT"/>
    <property type="molecule type" value="Genomic_DNA"/>
</dbReference>
<dbReference type="EMBL" id="CR382125">
    <property type="protein sequence ID" value="CAG99831.1"/>
    <property type="molecule type" value="Genomic_DNA"/>
</dbReference>
<dbReference type="PIR" id="S07892">
    <property type="entry name" value="HSVK3L"/>
</dbReference>
<dbReference type="RefSeq" id="XP_454338.1">
    <property type="nucleotide sequence ID" value="XM_454338.1"/>
</dbReference>
<dbReference type="RefSeq" id="XP_454744.1">
    <property type="nucleotide sequence ID" value="XM_454744.1"/>
</dbReference>
<dbReference type="PDB" id="1PEG">
    <property type="method" value="X-ray"/>
    <property type="resolution" value="2.59 A"/>
    <property type="chains" value="P/Q=2-16"/>
</dbReference>
<dbReference type="PDB" id="5VE8">
    <property type="method" value="X-ray"/>
    <property type="resolution" value="2.70 A"/>
    <property type="chains" value="C/E=2-29"/>
</dbReference>
<dbReference type="PDBsum" id="1PEG"/>
<dbReference type="PDBsum" id="5VE8"/>
<dbReference type="SMR" id="P61831"/>
<dbReference type="FunCoup" id="P61831">
    <property type="interactions" value="1041"/>
</dbReference>
<dbReference type="STRING" id="284590.P61831"/>
<dbReference type="PaxDb" id="284590-P61831"/>
<dbReference type="KEGG" id="kla:KLLA0_E08625g"/>
<dbReference type="KEGG" id="kla:KLLA0_E17623g"/>
<dbReference type="eggNOG" id="KOG1745">
    <property type="taxonomic scope" value="Eukaryota"/>
</dbReference>
<dbReference type="HOGENOM" id="CLU_078295_4_3_1"/>
<dbReference type="InParanoid" id="P61831"/>
<dbReference type="Proteomes" id="UP000000598">
    <property type="component" value="Chromosome E"/>
</dbReference>
<dbReference type="GO" id="GO:0000786">
    <property type="term" value="C:nucleosome"/>
    <property type="evidence" value="ECO:0007669"/>
    <property type="project" value="UniProtKB-KW"/>
</dbReference>
<dbReference type="GO" id="GO:0005634">
    <property type="term" value="C:nucleus"/>
    <property type="evidence" value="ECO:0007669"/>
    <property type="project" value="UniProtKB-SubCell"/>
</dbReference>
<dbReference type="GO" id="GO:0003677">
    <property type="term" value="F:DNA binding"/>
    <property type="evidence" value="ECO:0007669"/>
    <property type="project" value="UniProtKB-KW"/>
</dbReference>
<dbReference type="GO" id="GO:0046982">
    <property type="term" value="F:protein heterodimerization activity"/>
    <property type="evidence" value="ECO:0007669"/>
    <property type="project" value="InterPro"/>
</dbReference>
<dbReference type="GO" id="GO:0030527">
    <property type="term" value="F:structural constituent of chromatin"/>
    <property type="evidence" value="ECO:0007669"/>
    <property type="project" value="InterPro"/>
</dbReference>
<dbReference type="CDD" id="cd22911">
    <property type="entry name" value="HFD_H3"/>
    <property type="match status" value="1"/>
</dbReference>
<dbReference type="FunFam" id="1.10.20.10:FF:000010">
    <property type="entry name" value="Histone H3"/>
    <property type="match status" value="1"/>
</dbReference>
<dbReference type="Gene3D" id="1.10.20.10">
    <property type="entry name" value="Histone, subunit A"/>
    <property type="match status" value="1"/>
</dbReference>
<dbReference type="InterPro" id="IPR009072">
    <property type="entry name" value="Histone-fold"/>
</dbReference>
<dbReference type="InterPro" id="IPR007125">
    <property type="entry name" value="Histone_H2A/H2B/H3"/>
</dbReference>
<dbReference type="InterPro" id="IPR000164">
    <property type="entry name" value="Histone_H3/CENP-A"/>
</dbReference>
<dbReference type="PANTHER" id="PTHR11426">
    <property type="entry name" value="HISTONE H3"/>
    <property type="match status" value="1"/>
</dbReference>
<dbReference type="Pfam" id="PF00125">
    <property type="entry name" value="Histone"/>
    <property type="match status" value="1"/>
</dbReference>
<dbReference type="PRINTS" id="PR00622">
    <property type="entry name" value="HISTONEH3"/>
</dbReference>
<dbReference type="SMART" id="SM00428">
    <property type="entry name" value="H3"/>
    <property type="match status" value="1"/>
</dbReference>
<dbReference type="SUPFAM" id="SSF47113">
    <property type="entry name" value="Histone-fold"/>
    <property type="match status" value="1"/>
</dbReference>
<dbReference type="PROSITE" id="PS00322">
    <property type="entry name" value="HISTONE_H3_1"/>
    <property type="match status" value="1"/>
</dbReference>
<dbReference type="PROSITE" id="PS00959">
    <property type="entry name" value="HISTONE_H3_2"/>
    <property type="match status" value="1"/>
</dbReference>
<reference key="1">
    <citation type="journal article" date="1989" name="Yeast">
        <title>Cloning and analysis of the Kluyveromyces lactis TRP1 gene: a chromosomal locus flanked by genes encoding inorganic pyrophosphatase and histone H3.</title>
        <authorList>
            <person name="Stark M.J.R."/>
            <person name="Milner J.S."/>
        </authorList>
    </citation>
    <scope>NUCLEOTIDE SEQUENCE [GENOMIC DNA]</scope>
</reference>
<reference key="2">
    <citation type="journal article" date="2004" name="Nature">
        <title>Genome evolution in yeasts.</title>
        <authorList>
            <person name="Dujon B."/>
            <person name="Sherman D."/>
            <person name="Fischer G."/>
            <person name="Durrens P."/>
            <person name="Casaregola S."/>
            <person name="Lafontaine I."/>
            <person name="de Montigny J."/>
            <person name="Marck C."/>
            <person name="Neuveglise C."/>
            <person name="Talla E."/>
            <person name="Goffard N."/>
            <person name="Frangeul L."/>
            <person name="Aigle M."/>
            <person name="Anthouard V."/>
            <person name="Babour A."/>
            <person name="Barbe V."/>
            <person name="Barnay S."/>
            <person name="Blanchin S."/>
            <person name="Beckerich J.-M."/>
            <person name="Beyne E."/>
            <person name="Bleykasten C."/>
            <person name="Boisrame A."/>
            <person name="Boyer J."/>
            <person name="Cattolico L."/>
            <person name="Confanioleri F."/>
            <person name="de Daruvar A."/>
            <person name="Despons L."/>
            <person name="Fabre E."/>
            <person name="Fairhead C."/>
            <person name="Ferry-Dumazet H."/>
            <person name="Groppi A."/>
            <person name="Hantraye F."/>
            <person name="Hennequin C."/>
            <person name="Jauniaux N."/>
            <person name="Joyet P."/>
            <person name="Kachouri R."/>
            <person name="Kerrest A."/>
            <person name="Koszul R."/>
            <person name="Lemaire M."/>
            <person name="Lesur I."/>
            <person name="Ma L."/>
            <person name="Muller H."/>
            <person name="Nicaud J.-M."/>
            <person name="Nikolski M."/>
            <person name="Oztas S."/>
            <person name="Ozier-Kalogeropoulos O."/>
            <person name="Pellenz S."/>
            <person name="Potier S."/>
            <person name="Richard G.-F."/>
            <person name="Straub M.-L."/>
            <person name="Suleau A."/>
            <person name="Swennen D."/>
            <person name="Tekaia F."/>
            <person name="Wesolowski-Louvel M."/>
            <person name="Westhof E."/>
            <person name="Wirth B."/>
            <person name="Zeniou-Meyer M."/>
            <person name="Zivanovic Y."/>
            <person name="Bolotin-Fukuhara M."/>
            <person name="Thierry A."/>
            <person name="Bouchier C."/>
            <person name="Caudron B."/>
            <person name="Scarpelli C."/>
            <person name="Gaillardin C."/>
            <person name="Weissenbach J."/>
            <person name="Wincker P."/>
            <person name="Souciet J.-L."/>
        </authorList>
    </citation>
    <scope>NUCLEOTIDE SEQUENCE [LARGE SCALE GENOMIC DNA]</scope>
    <source>
        <strain>ATCC 8585 / CBS 2359 / DSM 70799 / NBRC 1267 / NRRL Y-1140 / WM37</strain>
    </source>
</reference>
<comment type="function">
    <text>Core component of nucleosome. Nucleosomes wrap and compact DNA into chromatin, limiting DNA accessibility to the cellular machineries which require DNA as a template. Histones thereby play a central role in transcription regulation, DNA repair, DNA replication and chromosomal stability. DNA accessibility is regulated via a complex set of post-translational modifications of histones, also called histone code, and nucleosome remodeling.</text>
</comment>
<comment type="subunit">
    <text>The nucleosome is a histone octamer containing two molecules each of H2A, H2B, H3 and H4 assembled in one H3-H4 heterotetramer and two H2A-H2B heterodimers. The octamer wraps approximately 147 bp of DNA.</text>
</comment>
<comment type="subcellular location">
    <subcellularLocation>
        <location evidence="1">Nucleus</location>
    </subcellularLocation>
    <subcellularLocation>
        <location evidence="1">Chromosome</location>
    </subcellularLocation>
</comment>
<comment type="PTM">
    <text evidence="1">Phosphorylated by IPL1 to form H3S10ph. H3S10ph promotes subsequent H3K14ac formation by GCN5 and is required for transcriptional activation through TBP recruitment to the promoters (By similarity).</text>
</comment>
<comment type="PTM">
    <text evidence="1">Mono-, di- and trimethylated by the COMPASS complex to form H3K4me1/2/3. H3K4me activates gene expression by regulating transcription elongation and plays a role in telomere length maintenance. H3K4me enrichment correlates with transcription levels, and occurs in a 5' to 3' gradient with H3K4me3 enrichment at the 5'-end of genes, shifting to H3K4me2 and then H3K4me1. Methylated by SET2 to form H3K36me. H3K36me represses gene expression. Methylated by DOT1 to form H3K79me. H3K79me is required for association of SIR proteins with telomeric regions and for telomeric silencing. The COMPASS-mediated formation of H3K4me2/3 and the DOT1-mediated formation of H3K79me require H2BK123ub1 (By similarity).</text>
</comment>
<comment type="PTM">
    <text evidence="1">Acetylation of histone H3 leads to transcriptional activation. H3K14ac formation by GCN5 is promoted by H3S10ph. H3K14ac can also be formed by ESA1. H3K56ac formation occurs predominantly in newly synthesized H3 molecules during G1, S and G2/M of the cell cycle and may be involved in DNA repair (By similarity).</text>
</comment>
<comment type="similarity">
    <text evidence="3">Belongs to the histone H3 family.</text>
</comment>
<comment type="caution">
    <text evidence="3">To ensure consistency between histone entries, we follow the 'Brno' nomenclature for histone modifications, with positions referring to those used in the literature for the 'closest' model organism. Due to slight variations in histone sequences between organisms and to the presence of initiator methionine in UniProtKB/Swiss-Prot sequences, the actual positions of modified amino acids in the sequence generally differ. In this entry the following conventions are used: H3K4me1/2/3 = mono-, di- and trimethylated Lys-5; H3K9ac = acetylated Lys-10; H3K9me1 = monomethylated Lys-10; H3S10ph = phosphorylated Ser-11; H3K14ac = acetylated Lys-15; H3K14me2 = dimethylated Lys-15; H3K18ac = acetylated Lys-19; H3K18me1 = monomethylated Lys-19; H3K23ac = acetylated Lys-24; H3K23me1 = monomethylated Lys-24; H3K27ac = acetylated Lys-28; H3K27me1/2/3 = mono-, di- and trimethylated Lys-28; H3K36ac = acetylated Lys-37; H3K36me1/2/3 = mono-, di- and trimethylated Lys-37; H3K56ac = acetylated Lys-57; H3K64ac = acetylated Lys-65; H3K79me1/2/3 = mono-, di- and trimethylated Lys-80.</text>
</comment>
<comment type="sequence caution" evidence="3">
    <conflict type="erroneous initiation">
        <sequence resource="EMBL-CDS" id="CAG99425"/>
    </conflict>
</comment>